<sequence>GVLDIFKDAAKQILAHAAEQI</sequence>
<comment type="function">
    <text evidence="1">Has hemolytic activity against human erythrocytes and antibacterial activity against the Gram-negative bacterium E.coli.</text>
</comment>
<comment type="subcellular location">
    <subcellularLocation>
        <location evidence="1">Secreted</location>
    </subcellularLocation>
</comment>
<comment type="tissue specificity">
    <text evidence="1">Expressed by the skin dorsal glands.</text>
</comment>
<comment type="mass spectrometry"/>
<comment type="similarity">
    <text evidence="2">Belongs to the frog skin active peptide (FSAP) family. Ocellatin subfamily.</text>
</comment>
<comment type="online information" name="The antimicrobial peptide database">
    <link uri="https://wangapd3.com/database/query_output.php?ID=00544"/>
</comment>
<protein>
    <recommendedName>
        <fullName>Ocellatin-2</fullName>
    </recommendedName>
</protein>
<proteinExistence type="evidence at protein level"/>
<organism>
    <name type="scientific">Leptodactylus ocellatus</name>
    <name type="common">Argus frog</name>
    <name type="synonym">Leptodactylus macrosternum</name>
    <dbReference type="NCBI Taxonomy" id="928525"/>
    <lineage>
        <taxon>Eukaryota</taxon>
        <taxon>Metazoa</taxon>
        <taxon>Chordata</taxon>
        <taxon>Craniata</taxon>
        <taxon>Vertebrata</taxon>
        <taxon>Euteleostomi</taxon>
        <taxon>Amphibia</taxon>
        <taxon>Batrachia</taxon>
        <taxon>Anura</taxon>
        <taxon>Neobatrachia</taxon>
        <taxon>Hyloidea</taxon>
        <taxon>Leptodactylidae</taxon>
        <taxon>Leptodactylinae</taxon>
        <taxon>Leptodactylus</taxon>
    </lineage>
</organism>
<dbReference type="GO" id="GO:0005576">
    <property type="term" value="C:extracellular region"/>
    <property type="evidence" value="ECO:0007669"/>
    <property type="project" value="UniProtKB-SubCell"/>
</dbReference>
<dbReference type="GO" id="GO:0042742">
    <property type="term" value="P:defense response to bacterium"/>
    <property type="evidence" value="ECO:0007669"/>
    <property type="project" value="UniProtKB-KW"/>
</dbReference>
<dbReference type="GO" id="GO:0019836">
    <property type="term" value="P:symbiont-mediated hemolysis of host erythrocyte"/>
    <property type="evidence" value="ECO:0007669"/>
    <property type="project" value="InterPro"/>
</dbReference>
<dbReference type="InterPro" id="IPR012518">
    <property type="entry name" value="Antimicrobial15"/>
</dbReference>
<dbReference type="Pfam" id="PF08110">
    <property type="entry name" value="Antimicrobial15"/>
    <property type="match status" value="1"/>
</dbReference>
<feature type="peptide" id="PRO_0000043816" description="Ocellatin-2">
    <location>
        <begin position="1"/>
        <end position="21"/>
    </location>
</feature>
<feature type="modified residue" description="Isoleucine amide" evidence="1">
    <location>
        <position position="21"/>
    </location>
</feature>
<name>OCE2_LEPOE</name>
<accession>P83866</accession>
<reference evidence="2" key="1">
    <citation type="journal article" date="2004" name="Protein J.">
        <title>Ocellatins: new antimicrobial peptides from the skin secretion of the South American frog Leptodactylus ocellatus (Anura: Leptodactylidae).</title>
        <authorList>
            <person name="Nascimento A.C.C."/>
            <person name="Zanotta L.C."/>
            <person name="Kyaw C.M."/>
            <person name="Schwartz E.N.F."/>
            <person name="Schwartz C.A."/>
            <person name="Sebben A."/>
            <person name="Sousa M.V."/>
            <person name="Fontes W."/>
            <person name="Castro M.S."/>
        </authorList>
    </citation>
    <scope>PROTEIN SEQUENCE</scope>
    <scope>FUNCTION</scope>
    <scope>MASS SPECTROMETRY</scope>
    <scope>AMIDATION AT ILE-21</scope>
    <source>
        <tissue evidence="1">Skin secretion</tissue>
    </source>
</reference>
<reference evidence="2" key="2">
    <citation type="submission" date="2005-03" db="UniProtKB">
        <authorList>
            <person name="Nascimento A.C.C."/>
        </authorList>
    </citation>
    <scope>SEQUENCE REVISION</scope>
</reference>
<keyword id="KW-0027">Amidation</keyword>
<keyword id="KW-0878">Amphibian defense peptide</keyword>
<keyword id="KW-0044">Antibiotic</keyword>
<keyword id="KW-0929">Antimicrobial</keyword>
<keyword id="KW-0204">Cytolysis</keyword>
<keyword id="KW-0903">Direct protein sequencing</keyword>
<keyword id="KW-0354">Hemolysis</keyword>
<keyword id="KW-0964">Secreted</keyword>
<evidence type="ECO:0000269" key="1">
    <source>
    </source>
</evidence>
<evidence type="ECO:0000305" key="2"/>